<protein>
    <recommendedName>
        <fullName evidence="1">Endoribonuclease YbeY</fullName>
        <ecNumber evidence="1">3.1.-.-</ecNumber>
    </recommendedName>
</protein>
<dbReference type="EC" id="3.1.-.-" evidence="1"/>
<dbReference type="EMBL" id="CP000447">
    <property type="protein sequence ID" value="ABI70569.1"/>
    <property type="molecule type" value="Genomic_DNA"/>
</dbReference>
<dbReference type="RefSeq" id="WP_011636194.1">
    <property type="nucleotide sequence ID" value="NC_008345.1"/>
</dbReference>
<dbReference type="SMR" id="Q087J6"/>
<dbReference type="STRING" id="318167.Sfri_0711"/>
<dbReference type="KEGG" id="sfr:Sfri_0711"/>
<dbReference type="eggNOG" id="COG0319">
    <property type="taxonomic scope" value="Bacteria"/>
</dbReference>
<dbReference type="HOGENOM" id="CLU_106710_0_1_6"/>
<dbReference type="OrthoDB" id="9807740at2"/>
<dbReference type="Proteomes" id="UP000000684">
    <property type="component" value="Chromosome"/>
</dbReference>
<dbReference type="GO" id="GO:0005737">
    <property type="term" value="C:cytoplasm"/>
    <property type="evidence" value="ECO:0007669"/>
    <property type="project" value="UniProtKB-SubCell"/>
</dbReference>
<dbReference type="GO" id="GO:0004222">
    <property type="term" value="F:metalloendopeptidase activity"/>
    <property type="evidence" value="ECO:0007669"/>
    <property type="project" value="InterPro"/>
</dbReference>
<dbReference type="GO" id="GO:0004521">
    <property type="term" value="F:RNA endonuclease activity"/>
    <property type="evidence" value="ECO:0007669"/>
    <property type="project" value="UniProtKB-UniRule"/>
</dbReference>
<dbReference type="GO" id="GO:0008270">
    <property type="term" value="F:zinc ion binding"/>
    <property type="evidence" value="ECO:0007669"/>
    <property type="project" value="UniProtKB-UniRule"/>
</dbReference>
<dbReference type="GO" id="GO:0006364">
    <property type="term" value="P:rRNA processing"/>
    <property type="evidence" value="ECO:0007669"/>
    <property type="project" value="UniProtKB-UniRule"/>
</dbReference>
<dbReference type="Gene3D" id="3.40.390.30">
    <property type="entry name" value="Metalloproteases ('zincins'), catalytic domain"/>
    <property type="match status" value="1"/>
</dbReference>
<dbReference type="HAMAP" id="MF_00009">
    <property type="entry name" value="Endoribonucl_YbeY"/>
    <property type="match status" value="1"/>
</dbReference>
<dbReference type="InterPro" id="IPR023091">
    <property type="entry name" value="MetalPrtase_cat_dom_sf_prd"/>
</dbReference>
<dbReference type="InterPro" id="IPR002036">
    <property type="entry name" value="YbeY"/>
</dbReference>
<dbReference type="InterPro" id="IPR020549">
    <property type="entry name" value="YbeY_CS"/>
</dbReference>
<dbReference type="NCBIfam" id="TIGR00043">
    <property type="entry name" value="rRNA maturation RNase YbeY"/>
    <property type="match status" value="1"/>
</dbReference>
<dbReference type="PANTHER" id="PTHR46986">
    <property type="entry name" value="ENDORIBONUCLEASE YBEY, CHLOROPLASTIC"/>
    <property type="match status" value="1"/>
</dbReference>
<dbReference type="PANTHER" id="PTHR46986:SF1">
    <property type="entry name" value="ENDORIBONUCLEASE YBEY, CHLOROPLASTIC"/>
    <property type="match status" value="1"/>
</dbReference>
<dbReference type="Pfam" id="PF02130">
    <property type="entry name" value="YbeY"/>
    <property type="match status" value="1"/>
</dbReference>
<dbReference type="SUPFAM" id="SSF55486">
    <property type="entry name" value="Metalloproteases ('zincins'), catalytic domain"/>
    <property type="match status" value="1"/>
</dbReference>
<dbReference type="PROSITE" id="PS01306">
    <property type="entry name" value="UPF0054"/>
    <property type="match status" value="1"/>
</dbReference>
<feature type="chain" id="PRO_0000284305" description="Endoribonuclease YbeY">
    <location>
        <begin position="1"/>
        <end position="156"/>
    </location>
</feature>
<feature type="binding site" evidence="1">
    <location>
        <position position="117"/>
    </location>
    <ligand>
        <name>Zn(2+)</name>
        <dbReference type="ChEBI" id="CHEBI:29105"/>
        <note>catalytic</note>
    </ligand>
</feature>
<feature type="binding site" evidence="1">
    <location>
        <position position="121"/>
    </location>
    <ligand>
        <name>Zn(2+)</name>
        <dbReference type="ChEBI" id="CHEBI:29105"/>
        <note>catalytic</note>
    </ligand>
</feature>
<feature type="binding site" evidence="1">
    <location>
        <position position="127"/>
    </location>
    <ligand>
        <name>Zn(2+)</name>
        <dbReference type="ChEBI" id="CHEBI:29105"/>
        <note>catalytic</note>
    </ligand>
</feature>
<accession>Q087J6</accession>
<proteinExistence type="inferred from homology"/>
<gene>
    <name evidence="1" type="primary">ybeY</name>
    <name type="ordered locus">Sfri_0711</name>
</gene>
<evidence type="ECO:0000255" key="1">
    <source>
        <dbReference type="HAMAP-Rule" id="MF_00009"/>
    </source>
</evidence>
<name>YBEY_SHEFN</name>
<organism>
    <name type="scientific">Shewanella frigidimarina (strain NCIMB 400)</name>
    <dbReference type="NCBI Taxonomy" id="318167"/>
    <lineage>
        <taxon>Bacteria</taxon>
        <taxon>Pseudomonadati</taxon>
        <taxon>Pseudomonadota</taxon>
        <taxon>Gammaproteobacteria</taxon>
        <taxon>Alteromonadales</taxon>
        <taxon>Shewanellaceae</taxon>
        <taxon>Shewanella</taxon>
    </lineage>
</organism>
<sequence length="156" mass="17394">MSQQGISLDLDLQIAVDNPRLPTQAEFETWVRAAIGQTKPVVELTIRIVDIAESQQLNSTYRGKDKPTNVLSFPFEAPPEVELPLLGDLVICAPVVEQEAIEQNKPLIAHWAHMVIHGSLHLLGYDHIIDEEADEMESLETQLVEGLGFDNPYKEA</sequence>
<keyword id="KW-0963">Cytoplasm</keyword>
<keyword id="KW-0255">Endonuclease</keyword>
<keyword id="KW-0378">Hydrolase</keyword>
<keyword id="KW-0479">Metal-binding</keyword>
<keyword id="KW-0540">Nuclease</keyword>
<keyword id="KW-1185">Reference proteome</keyword>
<keyword id="KW-0690">Ribosome biogenesis</keyword>
<keyword id="KW-0698">rRNA processing</keyword>
<keyword id="KW-0862">Zinc</keyword>
<reference key="1">
    <citation type="submission" date="2006-08" db="EMBL/GenBank/DDBJ databases">
        <title>Complete sequence of Shewanella frigidimarina NCIMB 400.</title>
        <authorList>
            <consortium name="US DOE Joint Genome Institute"/>
            <person name="Copeland A."/>
            <person name="Lucas S."/>
            <person name="Lapidus A."/>
            <person name="Barry K."/>
            <person name="Detter J.C."/>
            <person name="Glavina del Rio T."/>
            <person name="Hammon N."/>
            <person name="Israni S."/>
            <person name="Dalin E."/>
            <person name="Tice H."/>
            <person name="Pitluck S."/>
            <person name="Fredrickson J.K."/>
            <person name="Kolker E."/>
            <person name="McCuel L.A."/>
            <person name="DiChristina T."/>
            <person name="Nealson K.H."/>
            <person name="Newman D."/>
            <person name="Tiedje J.M."/>
            <person name="Zhou J."/>
            <person name="Romine M.F."/>
            <person name="Culley D.E."/>
            <person name="Serres M."/>
            <person name="Chertkov O."/>
            <person name="Brettin T."/>
            <person name="Bruce D."/>
            <person name="Han C."/>
            <person name="Tapia R."/>
            <person name="Gilna P."/>
            <person name="Schmutz J."/>
            <person name="Larimer F."/>
            <person name="Land M."/>
            <person name="Hauser L."/>
            <person name="Kyrpides N."/>
            <person name="Mikhailova N."/>
            <person name="Richardson P."/>
        </authorList>
    </citation>
    <scope>NUCLEOTIDE SEQUENCE [LARGE SCALE GENOMIC DNA]</scope>
    <source>
        <strain>NCIMB 400</strain>
    </source>
</reference>
<comment type="function">
    <text evidence="1">Single strand-specific metallo-endoribonuclease involved in late-stage 70S ribosome quality control and in maturation of the 3' terminus of the 16S rRNA.</text>
</comment>
<comment type="cofactor">
    <cofactor evidence="1">
        <name>Zn(2+)</name>
        <dbReference type="ChEBI" id="CHEBI:29105"/>
    </cofactor>
    <text evidence="1">Binds 1 zinc ion.</text>
</comment>
<comment type="subcellular location">
    <subcellularLocation>
        <location evidence="1">Cytoplasm</location>
    </subcellularLocation>
</comment>
<comment type="similarity">
    <text evidence="1">Belongs to the endoribonuclease YbeY family.</text>
</comment>